<comment type="catalytic activity">
    <reaction>
        <text>a phosphate monoester + H2O = an alcohol + phosphate</text>
        <dbReference type="Rhea" id="RHEA:15017"/>
        <dbReference type="ChEBI" id="CHEBI:15377"/>
        <dbReference type="ChEBI" id="CHEBI:30879"/>
        <dbReference type="ChEBI" id="CHEBI:43474"/>
        <dbReference type="ChEBI" id="CHEBI:67140"/>
        <dbReference type="EC" id="3.1.3.2"/>
    </reaction>
</comment>
<comment type="subcellular location">
    <subcellularLocation>
        <location>Secreted</location>
    </subcellularLocation>
</comment>
<comment type="PTM">
    <text>The N-terminus is blocked.</text>
</comment>
<organism>
    <name type="scientific">Penicillium chrysogenum</name>
    <name type="common">Penicillium notatum</name>
    <dbReference type="NCBI Taxonomy" id="5076"/>
    <lineage>
        <taxon>Eukaryota</taxon>
        <taxon>Fungi</taxon>
        <taxon>Dikarya</taxon>
        <taxon>Ascomycota</taxon>
        <taxon>Pezizomycotina</taxon>
        <taxon>Eurotiomycetes</taxon>
        <taxon>Eurotiomycetidae</taxon>
        <taxon>Eurotiales</taxon>
        <taxon>Aspergillaceae</taxon>
        <taxon>Penicillium</taxon>
        <taxon>Penicillium chrysogenum species complex</taxon>
    </lineage>
</organism>
<gene>
    <name type="primary">PHOA</name>
</gene>
<accession>P37274</accession>
<reference key="1">
    <citation type="journal article" date="1992" name="Gene">
        <title>Isolation and analysis of the Penicillium chrysogenum phoA gene encoding a secreted phosphate-repressible acid phosphatase.</title>
        <authorList>
            <person name="Haas H."/>
            <person name="Redl B."/>
            <person name="Friedlin E."/>
            <person name="Stoeffler G."/>
        </authorList>
    </citation>
    <scope>NUCLEOTIDE SEQUENCE [GENOMIC DNA]</scope>
    <scope>PARTIAL PROTEIN SEQUENCE</scope>
</reference>
<protein>
    <recommendedName>
        <fullName>Phosphate-repressible acid phosphatase</fullName>
        <ecNumber>3.1.3.2</ecNumber>
    </recommendedName>
</protein>
<evidence type="ECO:0000250" key="1"/>
<evidence type="ECO:0000255" key="2"/>
<dbReference type="EC" id="3.1.3.2"/>
<dbReference type="EMBL" id="M80366">
    <property type="protein sequence ID" value="AAA33693.1"/>
    <property type="molecule type" value="Genomic_DNA"/>
</dbReference>
<dbReference type="PIR" id="JN0319">
    <property type="entry name" value="JN0319"/>
</dbReference>
<dbReference type="SMR" id="P37274"/>
<dbReference type="GlyCosmos" id="P37274">
    <property type="glycosylation" value="7 sites, No reported glycans"/>
</dbReference>
<dbReference type="PhylomeDB" id="P37274"/>
<dbReference type="GO" id="GO:0005576">
    <property type="term" value="C:extracellular region"/>
    <property type="evidence" value="ECO:0007669"/>
    <property type="project" value="UniProtKB-SubCell"/>
</dbReference>
<dbReference type="GO" id="GO:0003993">
    <property type="term" value="F:acid phosphatase activity"/>
    <property type="evidence" value="ECO:0007669"/>
    <property type="project" value="UniProtKB-EC"/>
</dbReference>
<dbReference type="GO" id="GO:0009395">
    <property type="term" value="P:phospholipid catabolic process"/>
    <property type="evidence" value="ECO:0007669"/>
    <property type="project" value="TreeGrafter"/>
</dbReference>
<dbReference type="FunFam" id="3.40.720.10:FF:000043">
    <property type="entry name" value="Acid phosphatase PHOa"/>
    <property type="match status" value="1"/>
</dbReference>
<dbReference type="Gene3D" id="3.40.720.10">
    <property type="entry name" value="Alkaline Phosphatase, subunit A"/>
    <property type="match status" value="1"/>
</dbReference>
<dbReference type="InterPro" id="IPR017850">
    <property type="entry name" value="Alkaline_phosphatase_core_sf"/>
</dbReference>
<dbReference type="InterPro" id="IPR007312">
    <property type="entry name" value="Phosphoesterase"/>
</dbReference>
<dbReference type="PANTHER" id="PTHR31956">
    <property type="entry name" value="NON-SPECIFIC PHOSPHOLIPASE C4-RELATED"/>
    <property type="match status" value="1"/>
</dbReference>
<dbReference type="PANTHER" id="PTHR31956:SF23">
    <property type="entry name" value="PHOSPHATASE, PUTATIVE (AFU_ORTHOLOGUE AFUA_4G03660)-RELATED"/>
    <property type="match status" value="1"/>
</dbReference>
<dbReference type="Pfam" id="PF04185">
    <property type="entry name" value="Phosphoesterase"/>
    <property type="match status" value="1"/>
</dbReference>
<proteinExistence type="evidence at protein level"/>
<sequence length="412" mass="45628">MLTKQTLLAFVGALALATGTTTTEETPTQAEIDAARATALPYSPVSNVKGLAFDRFVNIWLENTDFEPAALDENLSKLAKEGILLTNYFAISHPSQPNYCASAGGDTFGMDNDDFLQIPSNVSTIADLFDTKHISWGEYQEDMPYAGYQGKRYPLSGPNQYVRKHNPLVLFNSVTDDAVRPRQIKNFTTFYDDLKHHSLPQHMFITPNMTNDAHDTNITVAGNWVDRFLSPLLKNEYFTKDSLVLLTFDEGDTYSYPNRVFSFLVGGAIPEHLKGTTDDTFYTHYSIVASLSANWGLPSLGRWDCGANLLKMVADKTGYVNWEVDTSNVYLNETYPGPMSTDNYSSKWAVPATKGKCSAGHGIAEVVKNTYHGLQPTYDYASPVPYDVTSGNNVGIKYHRTLVCILSCSSLS</sequence>
<name>PHOA_PENCH</name>
<keyword id="KW-0903">Direct protein sequencing</keyword>
<keyword id="KW-0325">Glycoprotein</keyword>
<keyword id="KW-0378">Hydrolase</keyword>
<keyword id="KW-0964">Secreted</keyword>
<keyword id="KW-0732">Signal</keyword>
<feature type="signal peptide" evidence="2">
    <location>
        <begin position="1"/>
        <end position="19"/>
    </location>
</feature>
<feature type="chain" id="PRO_0000023979" description="Phosphate-repressible acid phosphatase">
    <location>
        <begin position="20"/>
        <end position="412"/>
    </location>
</feature>
<feature type="active site" description="Proton donor" evidence="1">
    <location>
        <position position="215"/>
    </location>
</feature>
<feature type="glycosylation site" description="N-linked (GlcNAc...) asparagine" evidence="2">
    <location>
        <position position="74"/>
    </location>
</feature>
<feature type="glycosylation site" description="N-linked (GlcNAc...) asparagine" evidence="2">
    <location>
        <position position="121"/>
    </location>
</feature>
<feature type="glycosylation site" description="N-linked (GlcNAc...) asparagine" evidence="2">
    <location>
        <position position="186"/>
    </location>
</feature>
<feature type="glycosylation site" description="N-linked (GlcNAc...) asparagine" evidence="2">
    <location>
        <position position="208"/>
    </location>
</feature>
<feature type="glycosylation site" description="N-linked (GlcNAc...) asparagine" evidence="2">
    <location>
        <position position="217"/>
    </location>
</feature>
<feature type="glycosylation site" description="N-linked (GlcNAc...) asparagine" evidence="2">
    <location>
        <position position="332"/>
    </location>
</feature>
<feature type="glycosylation site" description="N-linked (GlcNAc...) asparagine" evidence="2">
    <location>
        <position position="343"/>
    </location>
</feature>